<name>ATPE_STRPB</name>
<accession>Q1JCL2</accession>
<feature type="chain" id="PRO_0000265902" description="ATP synthase epsilon chain">
    <location>
        <begin position="1"/>
        <end position="138"/>
    </location>
</feature>
<gene>
    <name evidence="1" type="primary">atpC</name>
    <name type="ordered locus">MGAS2096_Spy0644</name>
</gene>
<reference key="1">
    <citation type="journal article" date="2006" name="Proc. Natl. Acad. Sci. U.S.A.">
        <title>Molecular genetic anatomy of inter- and intraserotype variation in the human bacterial pathogen group A Streptococcus.</title>
        <authorList>
            <person name="Beres S.B."/>
            <person name="Richter E.W."/>
            <person name="Nagiec M.J."/>
            <person name="Sumby P."/>
            <person name="Porcella S.F."/>
            <person name="DeLeo F.R."/>
            <person name="Musser J.M."/>
        </authorList>
    </citation>
    <scope>NUCLEOTIDE SEQUENCE [LARGE SCALE GENOMIC DNA]</scope>
    <source>
        <strain>MGAS2096</strain>
    </source>
</reference>
<proteinExistence type="inferred from homology"/>
<organism>
    <name type="scientific">Streptococcus pyogenes serotype M12 (strain MGAS2096)</name>
    <dbReference type="NCBI Taxonomy" id="370553"/>
    <lineage>
        <taxon>Bacteria</taxon>
        <taxon>Bacillati</taxon>
        <taxon>Bacillota</taxon>
        <taxon>Bacilli</taxon>
        <taxon>Lactobacillales</taxon>
        <taxon>Streptococcaceae</taxon>
        <taxon>Streptococcus</taxon>
    </lineage>
</organism>
<dbReference type="EMBL" id="CP000261">
    <property type="protein sequence ID" value="ABF35696.1"/>
    <property type="molecule type" value="Genomic_DNA"/>
</dbReference>
<dbReference type="SMR" id="Q1JCL2"/>
<dbReference type="KEGG" id="spj:MGAS2096_Spy0644"/>
<dbReference type="HOGENOM" id="CLU_084338_1_0_9"/>
<dbReference type="GO" id="GO:0005886">
    <property type="term" value="C:plasma membrane"/>
    <property type="evidence" value="ECO:0007669"/>
    <property type="project" value="UniProtKB-SubCell"/>
</dbReference>
<dbReference type="GO" id="GO:0045259">
    <property type="term" value="C:proton-transporting ATP synthase complex"/>
    <property type="evidence" value="ECO:0007669"/>
    <property type="project" value="UniProtKB-KW"/>
</dbReference>
<dbReference type="GO" id="GO:0005524">
    <property type="term" value="F:ATP binding"/>
    <property type="evidence" value="ECO:0007669"/>
    <property type="project" value="UniProtKB-UniRule"/>
</dbReference>
<dbReference type="GO" id="GO:0046933">
    <property type="term" value="F:proton-transporting ATP synthase activity, rotational mechanism"/>
    <property type="evidence" value="ECO:0007669"/>
    <property type="project" value="UniProtKB-UniRule"/>
</dbReference>
<dbReference type="CDD" id="cd12152">
    <property type="entry name" value="F1-ATPase_delta"/>
    <property type="match status" value="1"/>
</dbReference>
<dbReference type="Gene3D" id="1.20.5.440">
    <property type="entry name" value="ATP synthase delta/epsilon subunit, C-terminal domain"/>
    <property type="match status" value="1"/>
</dbReference>
<dbReference type="Gene3D" id="2.60.15.10">
    <property type="entry name" value="F0F1 ATP synthase delta/epsilon subunit, N-terminal"/>
    <property type="match status" value="1"/>
</dbReference>
<dbReference type="HAMAP" id="MF_00530">
    <property type="entry name" value="ATP_synth_epsil_bac"/>
    <property type="match status" value="1"/>
</dbReference>
<dbReference type="InterPro" id="IPR001469">
    <property type="entry name" value="ATP_synth_F1_dsu/esu"/>
</dbReference>
<dbReference type="InterPro" id="IPR020546">
    <property type="entry name" value="ATP_synth_F1_dsu/esu_N"/>
</dbReference>
<dbReference type="InterPro" id="IPR020547">
    <property type="entry name" value="ATP_synth_F1_esu_C"/>
</dbReference>
<dbReference type="InterPro" id="IPR036771">
    <property type="entry name" value="ATPsynth_dsu/esu_N"/>
</dbReference>
<dbReference type="NCBIfam" id="TIGR01216">
    <property type="entry name" value="ATP_synt_epsi"/>
    <property type="match status" value="1"/>
</dbReference>
<dbReference type="NCBIfam" id="NF001846">
    <property type="entry name" value="PRK00571.1-3"/>
    <property type="match status" value="1"/>
</dbReference>
<dbReference type="PANTHER" id="PTHR13822">
    <property type="entry name" value="ATP SYNTHASE DELTA/EPSILON CHAIN"/>
    <property type="match status" value="1"/>
</dbReference>
<dbReference type="PANTHER" id="PTHR13822:SF10">
    <property type="entry name" value="ATP SYNTHASE EPSILON CHAIN, CHLOROPLASTIC"/>
    <property type="match status" value="1"/>
</dbReference>
<dbReference type="Pfam" id="PF00401">
    <property type="entry name" value="ATP-synt_DE"/>
    <property type="match status" value="1"/>
</dbReference>
<dbReference type="Pfam" id="PF02823">
    <property type="entry name" value="ATP-synt_DE_N"/>
    <property type="match status" value="1"/>
</dbReference>
<dbReference type="SUPFAM" id="SSF51344">
    <property type="entry name" value="Epsilon subunit of F1F0-ATP synthase N-terminal domain"/>
    <property type="match status" value="1"/>
</dbReference>
<sequence>MTQMTVQVVTPDGIKYDHHAKCISVTTPDGEMGILPNHINLIAPLQVHEMKIRRGGEDEKVDWIAINGGIIEIKDNVVTVVADSAERDRDIDVSRAERAKLRAEREIAQAETTHNIDEVRRAKVALRRALNRINVSKK</sequence>
<comment type="function">
    <text evidence="1">Produces ATP from ADP in the presence of a proton gradient across the membrane.</text>
</comment>
<comment type="subunit">
    <text>F-type ATPases have 2 components, CF(1) - the catalytic core - and CF(0) - the membrane proton channel. CF(1) has five subunits: alpha(3), beta(3), gamma(1), delta(1), epsilon(1). CF(0) has three main subunits: a, b and c.</text>
</comment>
<comment type="subcellular location">
    <subcellularLocation>
        <location evidence="1">Cell membrane</location>
        <topology evidence="1">Peripheral membrane protein</topology>
    </subcellularLocation>
</comment>
<comment type="similarity">
    <text evidence="1">Belongs to the ATPase epsilon chain family.</text>
</comment>
<keyword id="KW-0066">ATP synthesis</keyword>
<keyword id="KW-1003">Cell membrane</keyword>
<keyword id="KW-0139">CF(1)</keyword>
<keyword id="KW-0375">Hydrogen ion transport</keyword>
<keyword id="KW-0406">Ion transport</keyword>
<keyword id="KW-0472">Membrane</keyword>
<keyword id="KW-0813">Transport</keyword>
<evidence type="ECO:0000255" key="1">
    <source>
        <dbReference type="HAMAP-Rule" id="MF_00530"/>
    </source>
</evidence>
<protein>
    <recommendedName>
        <fullName evidence="1">ATP synthase epsilon chain</fullName>
    </recommendedName>
    <alternativeName>
        <fullName evidence="1">ATP synthase F1 sector epsilon subunit</fullName>
    </alternativeName>
    <alternativeName>
        <fullName evidence="1">F-ATPase epsilon subunit</fullName>
    </alternativeName>
</protein>